<gene>
    <name evidence="1" type="primary">nadE</name>
    <name type="ordered locus">PputGB1_4925</name>
</gene>
<dbReference type="EC" id="6.3.1.5" evidence="1"/>
<dbReference type="EMBL" id="CP000926">
    <property type="protein sequence ID" value="ABZ00810.1"/>
    <property type="molecule type" value="Genomic_DNA"/>
</dbReference>
<dbReference type="RefSeq" id="WP_012274439.1">
    <property type="nucleotide sequence ID" value="NC_010322.1"/>
</dbReference>
<dbReference type="SMR" id="B0KKX4"/>
<dbReference type="KEGG" id="ppg:PputGB1_4925"/>
<dbReference type="eggNOG" id="COG0171">
    <property type="taxonomic scope" value="Bacteria"/>
</dbReference>
<dbReference type="HOGENOM" id="CLU_059327_3_0_6"/>
<dbReference type="UniPathway" id="UPA00253">
    <property type="reaction ID" value="UER00333"/>
</dbReference>
<dbReference type="Proteomes" id="UP000002157">
    <property type="component" value="Chromosome"/>
</dbReference>
<dbReference type="GO" id="GO:0005737">
    <property type="term" value="C:cytoplasm"/>
    <property type="evidence" value="ECO:0007669"/>
    <property type="project" value="InterPro"/>
</dbReference>
<dbReference type="GO" id="GO:0005524">
    <property type="term" value="F:ATP binding"/>
    <property type="evidence" value="ECO:0007669"/>
    <property type="project" value="UniProtKB-UniRule"/>
</dbReference>
<dbReference type="GO" id="GO:0004359">
    <property type="term" value="F:glutaminase activity"/>
    <property type="evidence" value="ECO:0007669"/>
    <property type="project" value="InterPro"/>
</dbReference>
<dbReference type="GO" id="GO:0046872">
    <property type="term" value="F:metal ion binding"/>
    <property type="evidence" value="ECO:0007669"/>
    <property type="project" value="UniProtKB-KW"/>
</dbReference>
<dbReference type="GO" id="GO:0003952">
    <property type="term" value="F:NAD+ synthase (glutamine-hydrolyzing) activity"/>
    <property type="evidence" value="ECO:0007669"/>
    <property type="project" value="InterPro"/>
</dbReference>
<dbReference type="GO" id="GO:0008795">
    <property type="term" value="F:NAD+ synthase activity"/>
    <property type="evidence" value="ECO:0007669"/>
    <property type="project" value="UniProtKB-UniRule"/>
</dbReference>
<dbReference type="GO" id="GO:0009435">
    <property type="term" value="P:NAD biosynthetic process"/>
    <property type="evidence" value="ECO:0007669"/>
    <property type="project" value="UniProtKB-UniRule"/>
</dbReference>
<dbReference type="CDD" id="cd00553">
    <property type="entry name" value="NAD_synthase"/>
    <property type="match status" value="1"/>
</dbReference>
<dbReference type="Gene3D" id="3.40.50.620">
    <property type="entry name" value="HUPs"/>
    <property type="match status" value="1"/>
</dbReference>
<dbReference type="HAMAP" id="MF_00193">
    <property type="entry name" value="NadE_ammonia_dep"/>
    <property type="match status" value="1"/>
</dbReference>
<dbReference type="InterPro" id="IPR022310">
    <property type="entry name" value="NAD/GMP_synthase"/>
</dbReference>
<dbReference type="InterPro" id="IPR003694">
    <property type="entry name" value="NAD_synthase"/>
</dbReference>
<dbReference type="InterPro" id="IPR022926">
    <property type="entry name" value="NH(3)-dep_NAD(+)_synth"/>
</dbReference>
<dbReference type="InterPro" id="IPR014729">
    <property type="entry name" value="Rossmann-like_a/b/a_fold"/>
</dbReference>
<dbReference type="NCBIfam" id="TIGR00552">
    <property type="entry name" value="nadE"/>
    <property type="match status" value="1"/>
</dbReference>
<dbReference type="NCBIfam" id="NF001979">
    <property type="entry name" value="PRK00768.1"/>
    <property type="match status" value="1"/>
</dbReference>
<dbReference type="PANTHER" id="PTHR23090">
    <property type="entry name" value="NH 3 /GLUTAMINE-DEPENDENT NAD + SYNTHETASE"/>
    <property type="match status" value="1"/>
</dbReference>
<dbReference type="PANTHER" id="PTHR23090:SF7">
    <property type="entry name" value="NH(3)-DEPENDENT NAD(+) SYNTHETASE"/>
    <property type="match status" value="1"/>
</dbReference>
<dbReference type="Pfam" id="PF02540">
    <property type="entry name" value="NAD_synthase"/>
    <property type="match status" value="1"/>
</dbReference>
<dbReference type="SUPFAM" id="SSF52402">
    <property type="entry name" value="Adenine nucleotide alpha hydrolases-like"/>
    <property type="match status" value="1"/>
</dbReference>
<organism>
    <name type="scientific">Pseudomonas putida (strain GB-1)</name>
    <dbReference type="NCBI Taxonomy" id="76869"/>
    <lineage>
        <taxon>Bacteria</taxon>
        <taxon>Pseudomonadati</taxon>
        <taxon>Pseudomonadota</taxon>
        <taxon>Gammaproteobacteria</taxon>
        <taxon>Pseudomonadales</taxon>
        <taxon>Pseudomonadaceae</taxon>
        <taxon>Pseudomonas</taxon>
    </lineage>
</organism>
<keyword id="KW-0067">ATP-binding</keyword>
<keyword id="KW-0436">Ligase</keyword>
<keyword id="KW-0460">Magnesium</keyword>
<keyword id="KW-0479">Metal-binding</keyword>
<keyword id="KW-0520">NAD</keyword>
<keyword id="KW-0547">Nucleotide-binding</keyword>
<evidence type="ECO:0000255" key="1">
    <source>
        <dbReference type="HAMAP-Rule" id="MF_00193"/>
    </source>
</evidence>
<proteinExistence type="inferred from homology"/>
<accession>B0KKX4</accession>
<protein>
    <recommendedName>
        <fullName evidence="1">NH(3)-dependent NAD(+) synthetase</fullName>
        <ecNumber evidence="1">6.3.1.5</ecNumber>
    </recommendedName>
</protein>
<sequence length="275" mass="29375">MQAVQQEIAQALKVQPPFADAAALEAEVARRVTFIKGCLANARLKTLVLGISGGVDSLTAALLAQRAINELRAETGDKAYTFIAVRLPYQVQHDEHDAQACLDVIKADEVHTVDIAPAVRALAAEVVELKNGSPTLVDFVVGNVKARTRMVAQYTIAGARAGLVIGTDHAAEAVMGFFTKFGDGACDLAPLSGLVKNQVRAIARSFGAPESLVEKVPTADLEDLEPGKPDEASHGVTYQQIDAFLHGQPVDQAAFDIIVATYRKTQHKRELPFAP</sequence>
<reference key="1">
    <citation type="submission" date="2008-01" db="EMBL/GenBank/DDBJ databases">
        <title>Complete sequence of Pseudomonas putida GB-1.</title>
        <authorList>
            <consortium name="US DOE Joint Genome Institute"/>
            <person name="Copeland A."/>
            <person name="Lucas S."/>
            <person name="Lapidus A."/>
            <person name="Barry K."/>
            <person name="Glavina del Rio T."/>
            <person name="Dalin E."/>
            <person name="Tice H."/>
            <person name="Pitluck S."/>
            <person name="Bruce D."/>
            <person name="Goodwin L."/>
            <person name="Chertkov O."/>
            <person name="Brettin T."/>
            <person name="Detter J.C."/>
            <person name="Han C."/>
            <person name="Kuske C.R."/>
            <person name="Schmutz J."/>
            <person name="Larimer F."/>
            <person name="Land M."/>
            <person name="Hauser L."/>
            <person name="Kyrpides N."/>
            <person name="Kim E."/>
            <person name="McCarthy J.K."/>
            <person name="Richardson P."/>
        </authorList>
    </citation>
    <scope>NUCLEOTIDE SEQUENCE [LARGE SCALE GENOMIC DNA]</scope>
    <source>
        <strain>GB-1</strain>
    </source>
</reference>
<feature type="chain" id="PRO_1000077588" description="NH(3)-dependent NAD(+) synthetase">
    <location>
        <begin position="1"/>
        <end position="275"/>
    </location>
</feature>
<feature type="binding site" evidence="1">
    <location>
        <begin position="50"/>
        <end position="57"/>
    </location>
    <ligand>
        <name>ATP</name>
        <dbReference type="ChEBI" id="CHEBI:30616"/>
    </ligand>
</feature>
<feature type="binding site" evidence="1">
    <location>
        <position position="56"/>
    </location>
    <ligand>
        <name>Mg(2+)</name>
        <dbReference type="ChEBI" id="CHEBI:18420"/>
    </ligand>
</feature>
<feature type="binding site" evidence="1">
    <location>
        <position position="147"/>
    </location>
    <ligand>
        <name>deamido-NAD(+)</name>
        <dbReference type="ChEBI" id="CHEBI:58437"/>
    </ligand>
</feature>
<feature type="binding site" evidence="1">
    <location>
        <position position="167"/>
    </location>
    <ligand>
        <name>ATP</name>
        <dbReference type="ChEBI" id="CHEBI:30616"/>
    </ligand>
</feature>
<feature type="binding site" evidence="1">
    <location>
        <position position="172"/>
    </location>
    <ligand>
        <name>Mg(2+)</name>
        <dbReference type="ChEBI" id="CHEBI:18420"/>
    </ligand>
</feature>
<feature type="binding site" evidence="1">
    <location>
        <position position="180"/>
    </location>
    <ligand>
        <name>deamido-NAD(+)</name>
        <dbReference type="ChEBI" id="CHEBI:58437"/>
    </ligand>
</feature>
<feature type="binding site" evidence="1">
    <location>
        <position position="187"/>
    </location>
    <ligand>
        <name>deamido-NAD(+)</name>
        <dbReference type="ChEBI" id="CHEBI:58437"/>
    </ligand>
</feature>
<feature type="binding site" evidence="1">
    <location>
        <position position="196"/>
    </location>
    <ligand>
        <name>ATP</name>
        <dbReference type="ChEBI" id="CHEBI:30616"/>
    </ligand>
</feature>
<feature type="binding site" evidence="1">
    <location>
        <position position="218"/>
    </location>
    <ligand>
        <name>ATP</name>
        <dbReference type="ChEBI" id="CHEBI:30616"/>
    </ligand>
</feature>
<feature type="binding site" evidence="1">
    <location>
        <begin position="267"/>
        <end position="268"/>
    </location>
    <ligand>
        <name>deamido-NAD(+)</name>
        <dbReference type="ChEBI" id="CHEBI:58437"/>
    </ligand>
</feature>
<comment type="function">
    <text evidence="1">Catalyzes the ATP-dependent amidation of deamido-NAD to form NAD. Uses ammonia as a nitrogen source.</text>
</comment>
<comment type="catalytic activity">
    <reaction evidence="1">
        <text>deamido-NAD(+) + NH4(+) + ATP = AMP + diphosphate + NAD(+) + H(+)</text>
        <dbReference type="Rhea" id="RHEA:21188"/>
        <dbReference type="ChEBI" id="CHEBI:15378"/>
        <dbReference type="ChEBI" id="CHEBI:28938"/>
        <dbReference type="ChEBI" id="CHEBI:30616"/>
        <dbReference type="ChEBI" id="CHEBI:33019"/>
        <dbReference type="ChEBI" id="CHEBI:57540"/>
        <dbReference type="ChEBI" id="CHEBI:58437"/>
        <dbReference type="ChEBI" id="CHEBI:456215"/>
        <dbReference type="EC" id="6.3.1.5"/>
    </reaction>
</comment>
<comment type="pathway">
    <text evidence="1">Cofactor biosynthesis; NAD(+) biosynthesis; NAD(+) from deamido-NAD(+) (ammonia route): step 1/1.</text>
</comment>
<comment type="subunit">
    <text evidence="1">Homodimer.</text>
</comment>
<comment type="similarity">
    <text evidence="1">Belongs to the NAD synthetase family.</text>
</comment>
<name>NADE_PSEPG</name>